<feature type="chain" id="PRO_0000140602" description="Chorismate synthase">
    <location>
        <begin position="1"/>
        <end position="352"/>
    </location>
</feature>
<feature type="binding site" evidence="1">
    <location>
        <position position="48"/>
    </location>
    <ligand>
        <name>NADP(+)</name>
        <dbReference type="ChEBI" id="CHEBI:58349"/>
    </ligand>
</feature>
<feature type="binding site" evidence="1">
    <location>
        <begin position="125"/>
        <end position="127"/>
    </location>
    <ligand>
        <name>FMN</name>
        <dbReference type="ChEBI" id="CHEBI:58210"/>
    </ligand>
</feature>
<feature type="binding site" evidence="1">
    <location>
        <begin position="238"/>
        <end position="239"/>
    </location>
    <ligand>
        <name>FMN</name>
        <dbReference type="ChEBI" id="CHEBI:58210"/>
    </ligand>
</feature>
<feature type="binding site" evidence="1">
    <location>
        <position position="278"/>
    </location>
    <ligand>
        <name>FMN</name>
        <dbReference type="ChEBI" id="CHEBI:58210"/>
    </ligand>
</feature>
<feature type="binding site" evidence="1">
    <location>
        <begin position="293"/>
        <end position="297"/>
    </location>
    <ligand>
        <name>FMN</name>
        <dbReference type="ChEBI" id="CHEBI:58210"/>
    </ligand>
</feature>
<feature type="binding site" evidence="1">
    <location>
        <position position="319"/>
    </location>
    <ligand>
        <name>FMN</name>
        <dbReference type="ChEBI" id="CHEBI:58210"/>
    </ligand>
</feature>
<gene>
    <name evidence="1" type="primary">aroC</name>
    <name type="ordered locus">lpl2222</name>
</gene>
<keyword id="KW-0028">Amino-acid biosynthesis</keyword>
<keyword id="KW-0057">Aromatic amino acid biosynthesis</keyword>
<keyword id="KW-0274">FAD</keyword>
<keyword id="KW-0285">Flavoprotein</keyword>
<keyword id="KW-0288">FMN</keyword>
<keyword id="KW-0456">Lyase</keyword>
<keyword id="KW-0521">NADP</keyword>
<protein>
    <recommendedName>
        <fullName evidence="1">Chorismate synthase</fullName>
        <shortName evidence="1">CS</shortName>
        <ecNumber evidence="1">4.2.3.5</ecNumber>
    </recommendedName>
    <alternativeName>
        <fullName evidence="1">5-enolpyruvylshikimate-3-phosphate phospholyase</fullName>
    </alternativeName>
</protein>
<sequence length="352" mass="38401">MSGNTFGALFTVTTFGESHGPAIGCVVDGCPPGMSLTEADIQPFLDKRKPGQSKYTTQRREEDKVQILSGVFDGKTTGAPIALLIQNTDQRSRDYEDIKNLFRPGHADFTYHYKYGHRDYRGGGRSSARETAARVAAGAIARLYLKRYLNLDIIGYLQQMGDLKLQFENENEIDKNPFFCPNNKQIQELADYVDRLRRQGDSVGARVKILARGVPTGLGDPVFDKLDATLAYAMMSINAVKGVEIGAGFNAVEQLGSHHRDQMTAKGFLSNHAGGILGGIATGQPIEVSIALKPTSSITTPGQTINTEGEEVTVVTKGRHDPCVGIRAVPIAEAMMALVLMDHYLRHKAQCK</sequence>
<accession>Q5WUE6</accession>
<proteinExistence type="inferred from homology"/>
<reference key="1">
    <citation type="journal article" date="2004" name="Nat. Genet.">
        <title>Evidence in the Legionella pneumophila genome for exploitation of host cell functions and high genome plasticity.</title>
        <authorList>
            <person name="Cazalet C."/>
            <person name="Rusniok C."/>
            <person name="Brueggemann H."/>
            <person name="Zidane N."/>
            <person name="Magnier A."/>
            <person name="Ma L."/>
            <person name="Tichit M."/>
            <person name="Jarraud S."/>
            <person name="Bouchier C."/>
            <person name="Vandenesch F."/>
            <person name="Kunst F."/>
            <person name="Etienne J."/>
            <person name="Glaser P."/>
            <person name="Buchrieser C."/>
        </authorList>
    </citation>
    <scope>NUCLEOTIDE SEQUENCE [LARGE SCALE GENOMIC DNA]</scope>
    <source>
        <strain>Lens</strain>
    </source>
</reference>
<organism>
    <name type="scientific">Legionella pneumophila (strain Lens)</name>
    <dbReference type="NCBI Taxonomy" id="297245"/>
    <lineage>
        <taxon>Bacteria</taxon>
        <taxon>Pseudomonadati</taxon>
        <taxon>Pseudomonadota</taxon>
        <taxon>Gammaproteobacteria</taxon>
        <taxon>Legionellales</taxon>
        <taxon>Legionellaceae</taxon>
        <taxon>Legionella</taxon>
    </lineage>
</organism>
<evidence type="ECO:0000255" key="1">
    <source>
        <dbReference type="HAMAP-Rule" id="MF_00300"/>
    </source>
</evidence>
<comment type="function">
    <text evidence="1">Catalyzes the anti-1,4-elimination of the C-3 phosphate and the C-6 proR hydrogen from 5-enolpyruvylshikimate-3-phosphate (EPSP) to yield chorismate, which is the branch point compound that serves as the starting substrate for the three terminal pathways of aromatic amino acid biosynthesis. This reaction introduces a second double bond into the aromatic ring system.</text>
</comment>
<comment type="catalytic activity">
    <reaction evidence="1">
        <text>5-O-(1-carboxyvinyl)-3-phosphoshikimate = chorismate + phosphate</text>
        <dbReference type="Rhea" id="RHEA:21020"/>
        <dbReference type="ChEBI" id="CHEBI:29748"/>
        <dbReference type="ChEBI" id="CHEBI:43474"/>
        <dbReference type="ChEBI" id="CHEBI:57701"/>
        <dbReference type="EC" id="4.2.3.5"/>
    </reaction>
</comment>
<comment type="cofactor">
    <cofactor evidence="1">
        <name>FMNH2</name>
        <dbReference type="ChEBI" id="CHEBI:57618"/>
    </cofactor>
    <text evidence="1">Reduced FMN (FMNH(2)).</text>
</comment>
<comment type="pathway">
    <text evidence="1">Metabolic intermediate biosynthesis; chorismate biosynthesis; chorismate from D-erythrose 4-phosphate and phosphoenolpyruvate: step 7/7.</text>
</comment>
<comment type="subunit">
    <text evidence="1">Homotetramer.</text>
</comment>
<comment type="similarity">
    <text evidence="1">Belongs to the chorismate synthase family.</text>
</comment>
<name>AROC_LEGPL</name>
<dbReference type="EC" id="4.2.3.5" evidence="1"/>
<dbReference type="EMBL" id="CR628337">
    <property type="protein sequence ID" value="CAH16462.1"/>
    <property type="molecule type" value="Genomic_DNA"/>
</dbReference>
<dbReference type="RefSeq" id="WP_011216196.1">
    <property type="nucleotide sequence ID" value="NC_006369.1"/>
</dbReference>
<dbReference type="SMR" id="Q5WUE6"/>
<dbReference type="KEGG" id="lpf:lpl2222"/>
<dbReference type="LegioList" id="lpl2222"/>
<dbReference type="HOGENOM" id="CLU_034547_0_2_6"/>
<dbReference type="UniPathway" id="UPA00053">
    <property type="reaction ID" value="UER00090"/>
</dbReference>
<dbReference type="Proteomes" id="UP000002517">
    <property type="component" value="Chromosome"/>
</dbReference>
<dbReference type="GO" id="GO:0005829">
    <property type="term" value="C:cytosol"/>
    <property type="evidence" value="ECO:0007669"/>
    <property type="project" value="TreeGrafter"/>
</dbReference>
<dbReference type="GO" id="GO:0004107">
    <property type="term" value="F:chorismate synthase activity"/>
    <property type="evidence" value="ECO:0007669"/>
    <property type="project" value="UniProtKB-UniRule"/>
</dbReference>
<dbReference type="GO" id="GO:0010181">
    <property type="term" value="F:FMN binding"/>
    <property type="evidence" value="ECO:0007669"/>
    <property type="project" value="TreeGrafter"/>
</dbReference>
<dbReference type="GO" id="GO:0008652">
    <property type="term" value="P:amino acid biosynthetic process"/>
    <property type="evidence" value="ECO:0007669"/>
    <property type="project" value="UniProtKB-KW"/>
</dbReference>
<dbReference type="GO" id="GO:0009073">
    <property type="term" value="P:aromatic amino acid family biosynthetic process"/>
    <property type="evidence" value="ECO:0007669"/>
    <property type="project" value="UniProtKB-KW"/>
</dbReference>
<dbReference type="GO" id="GO:0009423">
    <property type="term" value="P:chorismate biosynthetic process"/>
    <property type="evidence" value="ECO:0007669"/>
    <property type="project" value="UniProtKB-UniRule"/>
</dbReference>
<dbReference type="CDD" id="cd07304">
    <property type="entry name" value="Chorismate_synthase"/>
    <property type="match status" value="1"/>
</dbReference>
<dbReference type="FunFam" id="3.60.150.10:FF:000001">
    <property type="entry name" value="Chorismate synthase"/>
    <property type="match status" value="1"/>
</dbReference>
<dbReference type="Gene3D" id="3.60.150.10">
    <property type="entry name" value="Chorismate synthase AroC"/>
    <property type="match status" value="1"/>
</dbReference>
<dbReference type="HAMAP" id="MF_00300">
    <property type="entry name" value="Chorismate_synth"/>
    <property type="match status" value="1"/>
</dbReference>
<dbReference type="InterPro" id="IPR000453">
    <property type="entry name" value="Chorismate_synth"/>
</dbReference>
<dbReference type="InterPro" id="IPR035904">
    <property type="entry name" value="Chorismate_synth_AroC_sf"/>
</dbReference>
<dbReference type="InterPro" id="IPR020541">
    <property type="entry name" value="Chorismate_synthase_CS"/>
</dbReference>
<dbReference type="NCBIfam" id="TIGR00033">
    <property type="entry name" value="aroC"/>
    <property type="match status" value="1"/>
</dbReference>
<dbReference type="NCBIfam" id="NF003793">
    <property type="entry name" value="PRK05382.1"/>
    <property type="match status" value="1"/>
</dbReference>
<dbReference type="PANTHER" id="PTHR21085">
    <property type="entry name" value="CHORISMATE SYNTHASE"/>
    <property type="match status" value="1"/>
</dbReference>
<dbReference type="PANTHER" id="PTHR21085:SF0">
    <property type="entry name" value="CHORISMATE SYNTHASE"/>
    <property type="match status" value="1"/>
</dbReference>
<dbReference type="Pfam" id="PF01264">
    <property type="entry name" value="Chorismate_synt"/>
    <property type="match status" value="1"/>
</dbReference>
<dbReference type="PIRSF" id="PIRSF001456">
    <property type="entry name" value="Chorismate_synth"/>
    <property type="match status" value="1"/>
</dbReference>
<dbReference type="SUPFAM" id="SSF103263">
    <property type="entry name" value="Chorismate synthase, AroC"/>
    <property type="match status" value="1"/>
</dbReference>
<dbReference type="PROSITE" id="PS00787">
    <property type="entry name" value="CHORISMATE_SYNTHASE_1"/>
    <property type="match status" value="1"/>
</dbReference>
<dbReference type="PROSITE" id="PS00788">
    <property type="entry name" value="CHORISMATE_SYNTHASE_2"/>
    <property type="match status" value="1"/>
</dbReference>
<dbReference type="PROSITE" id="PS00789">
    <property type="entry name" value="CHORISMATE_SYNTHASE_3"/>
    <property type="match status" value="1"/>
</dbReference>